<evidence type="ECO:0000255" key="1">
    <source>
        <dbReference type="HAMAP-Rule" id="MF_00821"/>
    </source>
</evidence>
<dbReference type="EMBL" id="AE016825">
    <property type="protein sequence ID" value="AAQ58802.1"/>
    <property type="molecule type" value="Genomic_DNA"/>
</dbReference>
<dbReference type="RefSeq" id="WP_011134682.1">
    <property type="nucleotide sequence ID" value="NC_005085.1"/>
</dbReference>
<dbReference type="SMR" id="Q7NYZ5"/>
<dbReference type="STRING" id="243365.CV_1127"/>
<dbReference type="GeneID" id="66366828"/>
<dbReference type="KEGG" id="cvi:CV_1127"/>
<dbReference type="eggNOG" id="COG1952">
    <property type="taxonomic scope" value="Bacteria"/>
</dbReference>
<dbReference type="HOGENOM" id="CLU_111574_1_0_4"/>
<dbReference type="OrthoDB" id="9795145at2"/>
<dbReference type="Proteomes" id="UP000001424">
    <property type="component" value="Chromosome"/>
</dbReference>
<dbReference type="GO" id="GO:0005737">
    <property type="term" value="C:cytoplasm"/>
    <property type="evidence" value="ECO:0007669"/>
    <property type="project" value="UniProtKB-SubCell"/>
</dbReference>
<dbReference type="GO" id="GO:0051082">
    <property type="term" value="F:unfolded protein binding"/>
    <property type="evidence" value="ECO:0007669"/>
    <property type="project" value="InterPro"/>
</dbReference>
<dbReference type="GO" id="GO:0006457">
    <property type="term" value="P:protein folding"/>
    <property type="evidence" value="ECO:0007669"/>
    <property type="project" value="UniProtKB-UniRule"/>
</dbReference>
<dbReference type="GO" id="GO:0051262">
    <property type="term" value="P:protein tetramerization"/>
    <property type="evidence" value="ECO:0007669"/>
    <property type="project" value="InterPro"/>
</dbReference>
<dbReference type="GO" id="GO:0015031">
    <property type="term" value="P:protein transport"/>
    <property type="evidence" value="ECO:0007669"/>
    <property type="project" value="UniProtKB-UniRule"/>
</dbReference>
<dbReference type="Gene3D" id="3.10.420.10">
    <property type="entry name" value="SecB-like"/>
    <property type="match status" value="1"/>
</dbReference>
<dbReference type="HAMAP" id="MF_00821">
    <property type="entry name" value="SecB"/>
    <property type="match status" value="1"/>
</dbReference>
<dbReference type="InterPro" id="IPR003708">
    <property type="entry name" value="SecB"/>
</dbReference>
<dbReference type="InterPro" id="IPR035958">
    <property type="entry name" value="SecB-like_sf"/>
</dbReference>
<dbReference type="NCBIfam" id="NF004392">
    <property type="entry name" value="PRK05751.1-3"/>
    <property type="match status" value="1"/>
</dbReference>
<dbReference type="NCBIfam" id="NF004393">
    <property type="entry name" value="PRK05751.1-4"/>
    <property type="match status" value="1"/>
</dbReference>
<dbReference type="NCBIfam" id="NF004394">
    <property type="entry name" value="PRK05751.1-5"/>
    <property type="match status" value="1"/>
</dbReference>
<dbReference type="NCBIfam" id="TIGR00809">
    <property type="entry name" value="secB"/>
    <property type="match status" value="1"/>
</dbReference>
<dbReference type="PANTHER" id="PTHR36918">
    <property type="match status" value="1"/>
</dbReference>
<dbReference type="PANTHER" id="PTHR36918:SF1">
    <property type="entry name" value="PROTEIN-EXPORT PROTEIN SECB"/>
    <property type="match status" value="1"/>
</dbReference>
<dbReference type="Pfam" id="PF02556">
    <property type="entry name" value="SecB"/>
    <property type="match status" value="1"/>
</dbReference>
<dbReference type="PRINTS" id="PR01594">
    <property type="entry name" value="SECBCHAPRONE"/>
</dbReference>
<dbReference type="SUPFAM" id="SSF54611">
    <property type="entry name" value="SecB-like"/>
    <property type="match status" value="1"/>
</dbReference>
<accession>Q7NYZ5</accession>
<sequence>MSEQQELQPAFSIEKIYVKDISLEVPNAPQVFLEQAQPEIDMQLASAGQQLDDGFFEVTLTVTVTAKLPEKTMFLCEVAQAGIFQIRNIPGEDLDPILGVACPNILFPYARETVSSVVNRAGFPPVLLAPINFEALYMQQRAQQAEAGNA</sequence>
<reference key="1">
    <citation type="journal article" date="2003" name="Proc. Natl. Acad. Sci. U.S.A.">
        <title>The complete genome sequence of Chromobacterium violaceum reveals remarkable and exploitable bacterial adaptability.</title>
        <authorList>
            <person name="Vasconcelos A.T.R."/>
            <person name="de Almeida D.F."/>
            <person name="Hungria M."/>
            <person name="Guimaraes C.T."/>
            <person name="Antonio R.V."/>
            <person name="Almeida F.C."/>
            <person name="de Almeida L.G.P."/>
            <person name="de Almeida R."/>
            <person name="Alves-Gomes J.A."/>
            <person name="Andrade E.M."/>
            <person name="Araripe J."/>
            <person name="de Araujo M.F.F."/>
            <person name="Astolfi-Filho S."/>
            <person name="Azevedo V."/>
            <person name="Baptista A.J."/>
            <person name="Bataus L.A.M."/>
            <person name="Batista J.S."/>
            <person name="Belo A."/>
            <person name="van den Berg C."/>
            <person name="Bogo M."/>
            <person name="Bonatto S."/>
            <person name="Bordignon J."/>
            <person name="Brigido M.M."/>
            <person name="Brito C.A."/>
            <person name="Brocchi M."/>
            <person name="Burity H.A."/>
            <person name="Camargo A.A."/>
            <person name="Cardoso D.D.P."/>
            <person name="Carneiro N.P."/>
            <person name="Carraro D.M."/>
            <person name="Carvalho C.M.B."/>
            <person name="Cascardo J.C.M."/>
            <person name="Cavada B.S."/>
            <person name="Chueire L.M.O."/>
            <person name="Creczynski-Pasa T.B."/>
            <person name="Cunha-Junior N.C."/>
            <person name="Fagundes N."/>
            <person name="Falcao C.L."/>
            <person name="Fantinatti F."/>
            <person name="Farias I.P."/>
            <person name="Felipe M.S.S."/>
            <person name="Ferrari L.P."/>
            <person name="Ferro J.A."/>
            <person name="Ferro M.I.T."/>
            <person name="Franco G.R."/>
            <person name="Freitas N.S.A."/>
            <person name="Furlan L.R."/>
            <person name="Gazzinelli R.T."/>
            <person name="Gomes E.A."/>
            <person name="Goncalves P.R."/>
            <person name="Grangeiro T.B."/>
            <person name="Grattapaglia D."/>
            <person name="Grisard E.C."/>
            <person name="Hanna E.S."/>
            <person name="Jardim S.N."/>
            <person name="Laurino J."/>
            <person name="Leoi L.C.T."/>
            <person name="Lima L.F.A."/>
            <person name="Loureiro M.F."/>
            <person name="Lyra M.C.C.P."/>
            <person name="Madeira H.M.F."/>
            <person name="Manfio G.P."/>
            <person name="Maranhao A.Q."/>
            <person name="Martins W.S."/>
            <person name="di Mauro S.M.Z."/>
            <person name="de Medeiros S.R.B."/>
            <person name="Meissner R.V."/>
            <person name="Moreira M.A.M."/>
            <person name="Nascimento F.F."/>
            <person name="Nicolas M.F."/>
            <person name="Oliveira J.G."/>
            <person name="Oliveira S.C."/>
            <person name="Paixao R.F.C."/>
            <person name="Parente J.A."/>
            <person name="Pedrosa F.O."/>
            <person name="Pena S.D.J."/>
            <person name="Pereira J.O."/>
            <person name="Pereira M."/>
            <person name="Pinto L.S.R.C."/>
            <person name="Pinto L.S."/>
            <person name="Porto J.I.R."/>
            <person name="Potrich D.P."/>
            <person name="Ramalho-Neto C.E."/>
            <person name="Reis A.M.M."/>
            <person name="Rigo L.U."/>
            <person name="Rondinelli E."/>
            <person name="Santos E.B.P."/>
            <person name="Santos F.R."/>
            <person name="Schneider M.P.C."/>
            <person name="Seuanez H.N."/>
            <person name="Silva A.M.R."/>
            <person name="da Silva A.L.C."/>
            <person name="Silva D.W."/>
            <person name="Silva R."/>
            <person name="Simoes I.C."/>
            <person name="Simon D."/>
            <person name="Soares C.M.A."/>
            <person name="Soares R.B.A."/>
            <person name="Souza E.M."/>
            <person name="Souza K.R.L."/>
            <person name="Souza R.C."/>
            <person name="Steffens M.B.R."/>
            <person name="Steindel M."/>
            <person name="Teixeira S.R."/>
            <person name="Urmenyi T."/>
            <person name="Vettore A."/>
            <person name="Wassem R."/>
            <person name="Zaha A."/>
            <person name="Simpson A.J.G."/>
        </authorList>
    </citation>
    <scope>NUCLEOTIDE SEQUENCE [LARGE SCALE GENOMIC DNA]</scope>
    <source>
        <strain>ATCC 12472 / DSM 30191 / JCM 1249 / CCUG 213 / NBRC 12614 / NCIMB 9131 / NCTC 9757 / MK</strain>
    </source>
</reference>
<name>SECB_CHRVO</name>
<proteinExistence type="inferred from homology"/>
<comment type="function">
    <text evidence="1">One of the proteins required for the normal export of preproteins out of the cell cytoplasm. It is a molecular chaperone that binds to a subset of precursor proteins, maintaining them in a translocation-competent state. It also specifically binds to its receptor SecA.</text>
</comment>
<comment type="subunit">
    <text evidence="1">Homotetramer, a dimer of dimers. One homotetramer interacts with 1 SecA dimer.</text>
</comment>
<comment type="subcellular location">
    <subcellularLocation>
        <location evidence="1">Cytoplasm</location>
    </subcellularLocation>
</comment>
<comment type="similarity">
    <text evidence="1">Belongs to the SecB family.</text>
</comment>
<keyword id="KW-0143">Chaperone</keyword>
<keyword id="KW-0963">Cytoplasm</keyword>
<keyword id="KW-0653">Protein transport</keyword>
<keyword id="KW-1185">Reference proteome</keyword>
<keyword id="KW-0811">Translocation</keyword>
<keyword id="KW-0813">Transport</keyword>
<gene>
    <name evidence="1" type="primary">secB</name>
    <name type="ordered locus">CV_1127</name>
</gene>
<feature type="chain" id="PRO_0000055361" description="Protein-export protein SecB">
    <location>
        <begin position="1"/>
        <end position="150"/>
    </location>
</feature>
<protein>
    <recommendedName>
        <fullName evidence="1">Protein-export protein SecB</fullName>
    </recommendedName>
</protein>
<organism>
    <name type="scientific">Chromobacterium violaceum (strain ATCC 12472 / DSM 30191 / JCM 1249 / CCUG 213 / NBRC 12614 / NCIMB 9131 / NCTC 9757 / MK)</name>
    <dbReference type="NCBI Taxonomy" id="243365"/>
    <lineage>
        <taxon>Bacteria</taxon>
        <taxon>Pseudomonadati</taxon>
        <taxon>Pseudomonadota</taxon>
        <taxon>Betaproteobacteria</taxon>
        <taxon>Neisseriales</taxon>
        <taxon>Chromobacteriaceae</taxon>
        <taxon>Chromobacterium</taxon>
    </lineage>
</organism>